<organism>
    <name type="scientific">Mus musculus</name>
    <name type="common">Mouse</name>
    <dbReference type="NCBI Taxonomy" id="10090"/>
    <lineage>
        <taxon>Eukaryota</taxon>
        <taxon>Metazoa</taxon>
        <taxon>Chordata</taxon>
        <taxon>Craniata</taxon>
        <taxon>Vertebrata</taxon>
        <taxon>Euteleostomi</taxon>
        <taxon>Mammalia</taxon>
        <taxon>Eutheria</taxon>
        <taxon>Euarchontoglires</taxon>
        <taxon>Glires</taxon>
        <taxon>Rodentia</taxon>
        <taxon>Myomorpha</taxon>
        <taxon>Muroidea</taxon>
        <taxon>Muridae</taxon>
        <taxon>Murinae</taxon>
        <taxon>Mus</taxon>
        <taxon>Mus</taxon>
    </lineage>
</organism>
<dbReference type="EMBL" id="M60468">
    <property type="protein sequence ID" value="AAA39751.1"/>
    <property type="molecule type" value="mRNA"/>
</dbReference>
<dbReference type="EMBL" id="M59377">
    <property type="protein sequence ID" value="AAA40464.1"/>
    <property type="molecule type" value="mRNA"/>
</dbReference>
<dbReference type="EMBL" id="X59238">
    <property type="protein sequence ID" value="CAA41922.1"/>
    <property type="molecule type" value="mRNA"/>
</dbReference>
<dbReference type="EMBL" id="X57796">
    <property type="protein sequence ID" value="CAA40936.1"/>
    <property type="molecule type" value="mRNA"/>
</dbReference>
<dbReference type="EMBL" id="L26349">
    <property type="protein sequence ID" value="AAA59361.1"/>
    <property type="molecule type" value="mRNA"/>
</dbReference>
<dbReference type="EMBL" id="M76656">
    <property type="protein sequence ID" value="AAA40465.1"/>
    <property type="molecule type" value="Genomic_DNA"/>
</dbReference>
<dbReference type="EMBL" id="M88067">
    <property type="protein sequence ID" value="AAA40465.1"/>
    <property type="status" value="JOINED"/>
    <property type="molecule type" value="Genomic_DNA"/>
</dbReference>
<dbReference type="EMBL" id="M76655">
    <property type="protein sequence ID" value="AAA40465.1"/>
    <property type="status" value="JOINED"/>
    <property type="molecule type" value="Genomic_DNA"/>
</dbReference>
<dbReference type="EMBL" id="BC004599">
    <property type="protein sequence ID" value="AAH04599.1"/>
    <property type="molecule type" value="mRNA"/>
</dbReference>
<dbReference type="EMBL" id="BC052675">
    <property type="protein sequence ID" value="AAH52675.1"/>
    <property type="molecule type" value="mRNA"/>
</dbReference>
<dbReference type="CCDS" id="CCDS20550.1"/>
<dbReference type="PIR" id="A38634">
    <property type="entry name" value="GQMST1"/>
</dbReference>
<dbReference type="RefSeq" id="NP_035739.2">
    <property type="nucleotide sequence ID" value="NM_011609.4"/>
</dbReference>
<dbReference type="SMR" id="P25118"/>
<dbReference type="BioGRID" id="204249">
    <property type="interactions" value="26"/>
</dbReference>
<dbReference type="CORUM" id="P25118"/>
<dbReference type="DIP" id="DIP-34532N"/>
<dbReference type="FunCoup" id="P25118">
    <property type="interactions" value="1113"/>
</dbReference>
<dbReference type="IntAct" id="P25118">
    <property type="interactions" value="27"/>
</dbReference>
<dbReference type="MINT" id="P25118"/>
<dbReference type="STRING" id="10090.ENSMUSP00000032491"/>
<dbReference type="GlyCosmos" id="P25118">
    <property type="glycosylation" value="4 sites, No reported glycans"/>
</dbReference>
<dbReference type="GlyGen" id="P25118">
    <property type="glycosylation" value="3 sites"/>
</dbReference>
<dbReference type="iPTMnet" id="P25118"/>
<dbReference type="PhosphoSitePlus" id="P25118"/>
<dbReference type="SwissPalm" id="P25118"/>
<dbReference type="PaxDb" id="10090-ENSMUSP00000032491"/>
<dbReference type="PeptideAtlas" id="P25118"/>
<dbReference type="ProteomicsDB" id="259146"/>
<dbReference type="Pumba" id="P25118"/>
<dbReference type="ABCD" id="P25118">
    <property type="antibodies" value="13 sequenced antibodies"/>
</dbReference>
<dbReference type="Antibodypedia" id="1320">
    <property type="antibodies" value="1493 antibodies from 50 providers"/>
</dbReference>
<dbReference type="DNASU" id="21937"/>
<dbReference type="Ensembl" id="ENSMUST00000032491.15">
    <property type="protein sequence ID" value="ENSMUSP00000032491.9"/>
    <property type="gene ID" value="ENSMUSG00000030341.18"/>
</dbReference>
<dbReference type="GeneID" id="21937"/>
<dbReference type="KEGG" id="mmu:21937"/>
<dbReference type="UCSC" id="uc009dul.2">
    <property type="organism name" value="mouse"/>
</dbReference>
<dbReference type="AGR" id="MGI:1314884"/>
<dbReference type="CTD" id="7132"/>
<dbReference type="MGI" id="MGI:1314884">
    <property type="gene designation" value="Tnfrsf1a"/>
</dbReference>
<dbReference type="VEuPathDB" id="HostDB:ENSMUSG00000030341"/>
<dbReference type="eggNOG" id="ENOG502S050">
    <property type="taxonomic scope" value="Eukaryota"/>
</dbReference>
<dbReference type="GeneTree" id="ENSGT00940000159540"/>
<dbReference type="HOGENOM" id="CLU_050864_0_0_1"/>
<dbReference type="InParanoid" id="P25118"/>
<dbReference type="OMA" id="IVETPCT"/>
<dbReference type="OrthoDB" id="78813at9989"/>
<dbReference type="PhylomeDB" id="P25118"/>
<dbReference type="TreeFam" id="TF333916"/>
<dbReference type="Reactome" id="R-MMU-5357786">
    <property type="pathway name" value="TNFR1-induced proapoptotic signaling"/>
</dbReference>
<dbReference type="Reactome" id="R-MMU-5357905">
    <property type="pathway name" value="Regulation of TNFR1 signaling"/>
</dbReference>
<dbReference type="Reactome" id="R-MMU-5357956">
    <property type="pathway name" value="TNFR1-induced NF-kappa-B signaling pathway"/>
</dbReference>
<dbReference type="Reactome" id="R-MMU-5626978">
    <property type="pathway name" value="TNFR1-mediated ceramide production"/>
</dbReference>
<dbReference type="Reactome" id="R-MMU-5669034">
    <property type="pathway name" value="TNFs bind their physiological receptors"/>
</dbReference>
<dbReference type="Reactome" id="R-MMU-75893">
    <property type="pathway name" value="TNF signaling"/>
</dbReference>
<dbReference type="BioGRID-ORCS" id="21937">
    <property type="hits" value="16 hits in 83 CRISPR screens"/>
</dbReference>
<dbReference type="ChiTaRS" id="Tnfrsf1a">
    <property type="organism name" value="mouse"/>
</dbReference>
<dbReference type="PRO" id="PR:P25118"/>
<dbReference type="Proteomes" id="UP000000589">
    <property type="component" value="Chromosome 6"/>
</dbReference>
<dbReference type="RNAct" id="P25118">
    <property type="molecule type" value="protein"/>
</dbReference>
<dbReference type="Bgee" id="ENSMUSG00000030341">
    <property type="expression patterns" value="Expressed in granulocyte and 227 other cell types or tissues"/>
</dbReference>
<dbReference type="ExpressionAtlas" id="P25118">
    <property type="expression patterns" value="baseline and differential"/>
</dbReference>
<dbReference type="GO" id="GO:0009986">
    <property type="term" value="C:cell surface"/>
    <property type="evidence" value="ECO:0000314"/>
    <property type="project" value="BHF-UCL"/>
</dbReference>
<dbReference type="GO" id="GO:0005615">
    <property type="term" value="C:extracellular space"/>
    <property type="evidence" value="ECO:0007669"/>
    <property type="project" value="Ensembl"/>
</dbReference>
<dbReference type="GO" id="GO:0000139">
    <property type="term" value="C:Golgi membrane"/>
    <property type="evidence" value="ECO:0000250"/>
    <property type="project" value="UniProtKB"/>
</dbReference>
<dbReference type="GO" id="GO:0045121">
    <property type="term" value="C:membrane raft"/>
    <property type="evidence" value="ECO:0000314"/>
    <property type="project" value="BHF-UCL"/>
</dbReference>
<dbReference type="GO" id="GO:0005886">
    <property type="term" value="C:plasma membrane"/>
    <property type="evidence" value="ECO:0000314"/>
    <property type="project" value="MGI"/>
</dbReference>
<dbReference type="GO" id="GO:0043235">
    <property type="term" value="C:receptor complex"/>
    <property type="evidence" value="ECO:0000266"/>
    <property type="project" value="MGI"/>
</dbReference>
<dbReference type="GO" id="GO:0038023">
    <property type="term" value="F:signaling receptor activity"/>
    <property type="evidence" value="ECO:0000314"/>
    <property type="project" value="MGI"/>
</dbReference>
<dbReference type="GO" id="GO:0043120">
    <property type="term" value="F:tumor necrosis factor binding"/>
    <property type="evidence" value="ECO:0007669"/>
    <property type="project" value="Ensembl"/>
</dbReference>
<dbReference type="GO" id="GO:0005031">
    <property type="term" value="F:tumor necrosis factor receptor activity"/>
    <property type="evidence" value="ECO:0000314"/>
    <property type="project" value="MGI"/>
</dbReference>
<dbReference type="GO" id="GO:0003176">
    <property type="term" value="P:aortic valve development"/>
    <property type="evidence" value="ECO:0000316"/>
    <property type="project" value="BHF-UCL"/>
</dbReference>
<dbReference type="GO" id="GO:0007166">
    <property type="term" value="P:cell surface receptor signaling pathway"/>
    <property type="evidence" value="ECO:0000315"/>
    <property type="project" value="MGI"/>
</dbReference>
<dbReference type="GO" id="GO:0007259">
    <property type="term" value="P:cell surface receptor signaling pathway via JAK-STAT"/>
    <property type="evidence" value="ECO:0007669"/>
    <property type="project" value="Ensembl"/>
</dbReference>
<dbReference type="GO" id="GO:0071260">
    <property type="term" value="P:cellular response to mechanical stimulus"/>
    <property type="evidence" value="ECO:0007669"/>
    <property type="project" value="Ensembl"/>
</dbReference>
<dbReference type="GO" id="GO:0019221">
    <property type="term" value="P:cytokine-mediated signaling pathway"/>
    <property type="evidence" value="ECO:0000315"/>
    <property type="project" value="MGI"/>
</dbReference>
<dbReference type="GO" id="GO:0006952">
    <property type="term" value="P:defense response"/>
    <property type="evidence" value="ECO:0000315"/>
    <property type="project" value="MGI"/>
</dbReference>
<dbReference type="GO" id="GO:0042742">
    <property type="term" value="P:defense response to bacterium"/>
    <property type="evidence" value="ECO:0000315"/>
    <property type="project" value="MGI"/>
</dbReference>
<dbReference type="GO" id="GO:0008625">
    <property type="term" value="P:extrinsic apoptotic signaling pathway via death domain receptors"/>
    <property type="evidence" value="ECO:0000304"/>
    <property type="project" value="MGI"/>
</dbReference>
<dbReference type="GO" id="GO:0006954">
    <property type="term" value="P:inflammatory response"/>
    <property type="evidence" value="ECO:0000315"/>
    <property type="project" value="MGI"/>
</dbReference>
<dbReference type="GO" id="GO:0008630">
    <property type="term" value="P:intrinsic apoptotic signaling pathway in response to DNA damage"/>
    <property type="evidence" value="ECO:0000315"/>
    <property type="project" value="MGI"/>
</dbReference>
<dbReference type="GO" id="GO:0010614">
    <property type="term" value="P:negative regulation of cardiac muscle hypertrophy"/>
    <property type="evidence" value="ECO:0000316"/>
    <property type="project" value="BHF-UCL"/>
</dbReference>
<dbReference type="GO" id="GO:0003332">
    <property type="term" value="P:negative regulation of extracellular matrix constituent secretion"/>
    <property type="evidence" value="ECO:0000316"/>
    <property type="project" value="BHF-UCL"/>
</dbReference>
<dbReference type="GO" id="GO:0050728">
    <property type="term" value="P:negative regulation of inflammatory response"/>
    <property type="evidence" value="ECO:0007669"/>
    <property type="project" value="Ensembl"/>
</dbReference>
<dbReference type="GO" id="GO:0034250">
    <property type="term" value="P:positive regulation of amide metabolic process"/>
    <property type="evidence" value="ECO:0000316"/>
    <property type="project" value="MGI"/>
</dbReference>
<dbReference type="GO" id="GO:1902339">
    <property type="term" value="P:positive regulation of apoptotic process involved in morphogenesis"/>
    <property type="evidence" value="ECO:0000316"/>
    <property type="project" value="BHF-UCL"/>
</dbReference>
<dbReference type="GO" id="GO:0043123">
    <property type="term" value="P:positive regulation of canonical NF-kappaB signal transduction"/>
    <property type="evidence" value="ECO:0000315"/>
    <property type="project" value="MGI"/>
</dbReference>
<dbReference type="GO" id="GO:1900119">
    <property type="term" value="P:positive regulation of execution phase of apoptosis"/>
    <property type="evidence" value="ECO:0000315"/>
    <property type="project" value="MGI"/>
</dbReference>
<dbReference type="GO" id="GO:0050729">
    <property type="term" value="P:positive regulation of inflammatory response"/>
    <property type="evidence" value="ECO:0000315"/>
    <property type="project" value="MGI"/>
</dbReference>
<dbReference type="GO" id="GO:0045834">
    <property type="term" value="P:positive regulation of lipid metabolic process"/>
    <property type="evidence" value="ECO:0000316"/>
    <property type="project" value="MGI"/>
</dbReference>
<dbReference type="GO" id="GO:0045944">
    <property type="term" value="P:positive regulation of transcription by RNA polymerase II"/>
    <property type="evidence" value="ECO:0000315"/>
    <property type="project" value="MGI"/>
</dbReference>
<dbReference type="GO" id="GO:0006693">
    <property type="term" value="P:prostaglandin metabolic process"/>
    <property type="evidence" value="ECO:0000304"/>
    <property type="project" value="MGI"/>
</dbReference>
<dbReference type="GO" id="GO:0072659">
    <property type="term" value="P:protein localization to plasma membrane"/>
    <property type="evidence" value="ECO:0007669"/>
    <property type="project" value="Ensembl"/>
</dbReference>
<dbReference type="GO" id="GO:0003177">
    <property type="term" value="P:pulmonary valve development"/>
    <property type="evidence" value="ECO:0000316"/>
    <property type="project" value="BHF-UCL"/>
</dbReference>
<dbReference type="GO" id="GO:1903140">
    <property type="term" value="P:regulation of establishment of endothelial barrier"/>
    <property type="evidence" value="ECO:0007669"/>
    <property type="project" value="Ensembl"/>
</dbReference>
<dbReference type="GO" id="GO:1905038">
    <property type="term" value="P:regulation of membrane lipid metabolic process"/>
    <property type="evidence" value="ECO:0000316"/>
    <property type="project" value="MGI"/>
</dbReference>
<dbReference type="GO" id="GO:0010803">
    <property type="term" value="P:regulation of tumor necrosis factor-mediated signaling pathway"/>
    <property type="evidence" value="ECO:0000316"/>
    <property type="project" value="MGI"/>
</dbReference>
<dbReference type="GO" id="GO:0006366">
    <property type="term" value="P:transcription by RNA polymerase II"/>
    <property type="evidence" value="ECO:0000315"/>
    <property type="project" value="MGI"/>
</dbReference>
<dbReference type="GO" id="GO:0033209">
    <property type="term" value="P:tumor necrosis factor-mediated signaling pathway"/>
    <property type="evidence" value="ECO:0000316"/>
    <property type="project" value="MGI"/>
</dbReference>
<dbReference type="CDD" id="cd08313">
    <property type="entry name" value="Death_TNFR1"/>
    <property type="match status" value="1"/>
</dbReference>
<dbReference type="CDD" id="cd10576">
    <property type="entry name" value="TNFRSF1A"/>
    <property type="match status" value="1"/>
</dbReference>
<dbReference type="FunFam" id="1.10.533.10:FF:000044">
    <property type="entry name" value="Tumor necrosis factor receptor superfamily member 1A"/>
    <property type="match status" value="1"/>
</dbReference>
<dbReference type="FunFam" id="2.10.50.10:FF:000020">
    <property type="entry name" value="Tumor necrosis factor receptor superfamily member 1A"/>
    <property type="match status" value="1"/>
</dbReference>
<dbReference type="FunFam" id="2.10.50.10:FF:000025">
    <property type="entry name" value="Tumor necrosis factor receptor superfamily member 1A"/>
    <property type="match status" value="1"/>
</dbReference>
<dbReference type="Gene3D" id="1.10.533.10">
    <property type="entry name" value="Death Domain, Fas"/>
    <property type="match status" value="1"/>
</dbReference>
<dbReference type="Gene3D" id="2.10.50.10">
    <property type="entry name" value="Tumor Necrosis Factor Receptor, subunit A, domain 2"/>
    <property type="match status" value="2"/>
</dbReference>
<dbReference type="InterPro" id="IPR011029">
    <property type="entry name" value="DEATH-like_dom_sf"/>
</dbReference>
<dbReference type="InterPro" id="IPR000488">
    <property type="entry name" value="Death_dom"/>
</dbReference>
<dbReference type="InterPro" id="IPR001368">
    <property type="entry name" value="TNFR/NGFR_Cys_rich_reg"/>
</dbReference>
<dbReference type="InterPro" id="IPR020419">
    <property type="entry name" value="TNFR_1A"/>
</dbReference>
<dbReference type="InterPro" id="IPR052493">
    <property type="entry name" value="TNFRSF1A"/>
</dbReference>
<dbReference type="InterPro" id="IPR033994">
    <property type="entry name" value="TNFRSF1A_death"/>
</dbReference>
<dbReference type="InterPro" id="IPR033993">
    <property type="entry name" value="TNFRSF1A_N"/>
</dbReference>
<dbReference type="PANTHER" id="PTHR46861">
    <property type="entry name" value="TUMOR NECROSIS FACTOR RECEPTOR SUPERFAMILY MEMBER 1A"/>
    <property type="match status" value="1"/>
</dbReference>
<dbReference type="PANTHER" id="PTHR46861:SF1">
    <property type="entry name" value="TUMOR NECROSIS FACTOR RECEPTOR SUPERFAMILY MEMBER 1A"/>
    <property type="match status" value="1"/>
</dbReference>
<dbReference type="Pfam" id="PF00531">
    <property type="entry name" value="Death"/>
    <property type="match status" value="1"/>
</dbReference>
<dbReference type="Pfam" id="PF00020">
    <property type="entry name" value="TNFR_c6"/>
    <property type="match status" value="3"/>
</dbReference>
<dbReference type="PRINTS" id="PR01918">
    <property type="entry name" value="TNFACTORR1A"/>
</dbReference>
<dbReference type="SMART" id="SM00005">
    <property type="entry name" value="DEATH"/>
    <property type="match status" value="1"/>
</dbReference>
<dbReference type="SMART" id="SM00208">
    <property type="entry name" value="TNFR"/>
    <property type="match status" value="4"/>
</dbReference>
<dbReference type="SUPFAM" id="SSF47986">
    <property type="entry name" value="DEATH domain"/>
    <property type="match status" value="1"/>
</dbReference>
<dbReference type="SUPFAM" id="SSF57586">
    <property type="entry name" value="TNF receptor-like"/>
    <property type="match status" value="3"/>
</dbReference>
<dbReference type="PROSITE" id="PS50017">
    <property type="entry name" value="DEATH_DOMAIN"/>
    <property type="match status" value="1"/>
</dbReference>
<dbReference type="PROSITE" id="PS00652">
    <property type="entry name" value="TNFR_NGFR_1"/>
    <property type="match status" value="3"/>
</dbReference>
<dbReference type="PROSITE" id="PS50050">
    <property type="entry name" value="TNFR_NGFR_2"/>
    <property type="match status" value="3"/>
</dbReference>
<proteinExistence type="evidence at protein level"/>
<accession>P25118</accession>
<keyword id="KW-0053">Apoptosis</keyword>
<keyword id="KW-1003">Cell membrane</keyword>
<keyword id="KW-1015">Disulfide bond</keyword>
<keyword id="KW-0325">Glycoprotein</keyword>
<keyword id="KW-0333">Golgi apparatus</keyword>
<keyword id="KW-0472">Membrane</keyword>
<keyword id="KW-0675">Receptor</keyword>
<keyword id="KW-1185">Reference proteome</keyword>
<keyword id="KW-0677">Repeat</keyword>
<keyword id="KW-0732">Signal</keyword>
<keyword id="KW-0812">Transmembrane</keyword>
<keyword id="KW-1133">Transmembrane helix</keyword>
<sequence length="454" mass="50130">MGLPTVPGLLLSLVLLALLMGIHPSGVTGLVPSLGDREKRDSLCPQGKYVHSKNNSICCTKCHKGTYLVSDCPSPGRDTVCRECEKGTFTASQNYLRQCLSCKTCRKEMSQVEISPCQADKDTVCGCKENQFQRYLSETHFQCVDCSPCFNGTVTIPCKETQNTVCNCHAGFFLRESECVPCSHCKKNEECMKLCLPPPLANVTNPQDSGTAVLLPLVILLGLCLLSFIFISLMCRYPRWRPEVYSIICRDPVPVKEEKAGKPLTPAPSPAFSPTSGFNPTLGFSTPGFSSPVSSTPISPIFGPSNWHFMPPVSEVVPTQGADPLLYESLCSVPAPTSVQKWEDSAHPQRPDNADLAILYAVVDGVPPARWKEFMRFMGLSEHEIERLEMQNGRCLREAQYSMLEAWRRRTPRHEDTLEVVGLVLSKMNLAGCLENILEALRNPAPSSTTRLPR</sequence>
<feature type="signal peptide" evidence="2">
    <location>
        <begin position="1"/>
        <end position="29"/>
    </location>
</feature>
<feature type="chain" id="PRO_0000034545" description="Tumor necrosis factor receptor superfamily member 1A">
    <location>
        <begin position="30"/>
        <end position="454"/>
    </location>
</feature>
<feature type="topological domain" description="Extracellular" evidence="3">
    <location>
        <begin position="30"/>
        <end position="212"/>
    </location>
</feature>
<feature type="transmembrane region" description="Helical" evidence="3">
    <location>
        <begin position="213"/>
        <end position="235"/>
    </location>
</feature>
<feature type="topological domain" description="Cytoplasmic" evidence="3">
    <location>
        <begin position="236"/>
        <end position="454"/>
    </location>
</feature>
<feature type="repeat" description="TNFR-Cys 1">
    <location>
        <begin position="43"/>
        <end position="82"/>
    </location>
</feature>
<feature type="repeat" description="TNFR-Cys 2">
    <location>
        <begin position="83"/>
        <end position="125"/>
    </location>
</feature>
<feature type="repeat" description="TNFR-Cys 3">
    <location>
        <begin position="126"/>
        <end position="166"/>
    </location>
</feature>
<feature type="repeat" description="TNFR-Cys 4">
    <location>
        <begin position="167"/>
        <end position="196"/>
    </location>
</feature>
<feature type="domain" description="Death" evidence="4">
    <location>
        <begin position="356"/>
        <end position="441"/>
    </location>
</feature>
<feature type="region of interest" description="N-SMase activation domain (NSD)">
    <location>
        <begin position="339"/>
        <end position="349"/>
    </location>
</feature>
<feature type="glycosylation site" description="N-linked (GlcNAc...) asparagine" evidence="3">
    <location>
        <position position="54"/>
    </location>
</feature>
<feature type="glycosylation site" description="N-linked (GlcNAc...) asparagine" evidence="3">
    <location>
        <position position="151"/>
    </location>
</feature>
<feature type="glycosylation site" description="N-linked (GlcNAc...) asparagine" evidence="3">
    <location>
        <position position="202"/>
    </location>
</feature>
<feature type="glycosylation site" description="(Microbial infection) N-beta-linked (GlcNAc) arginine" evidence="7">
    <location>
        <position position="376"/>
    </location>
</feature>
<feature type="disulfide bond" evidence="5">
    <location>
        <begin position="44"/>
        <end position="58"/>
    </location>
</feature>
<feature type="disulfide bond" evidence="5">
    <location>
        <begin position="59"/>
        <end position="72"/>
    </location>
</feature>
<feature type="disulfide bond" evidence="5">
    <location>
        <begin position="62"/>
        <end position="81"/>
    </location>
</feature>
<feature type="disulfide bond" evidence="5">
    <location>
        <begin position="84"/>
        <end position="99"/>
    </location>
</feature>
<feature type="disulfide bond" evidence="5">
    <location>
        <begin position="102"/>
        <end position="117"/>
    </location>
</feature>
<feature type="disulfide bond" evidence="5">
    <location>
        <begin position="105"/>
        <end position="125"/>
    </location>
</feature>
<feature type="disulfide bond" evidence="5">
    <location>
        <begin position="127"/>
        <end position="143"/>
    </location>
</feature>
<feature type="disulfide bond" evidence="5">
    <location>
        <begin position="146"/>
        <end position="158"/>
    </location>
</feature>
<feature type="disulfide bond" evidence="5">
    <location>
        <begin position="149"/>
        <end position="166"/>
    </location>
</feature>
<feature type="disulfide bond" evidence="5">
    <location>
        <begin position="168"/>
        <end position="179"/>
    </location>
</feature>
<feature type="disulfide bond" evidence="5">
    <location>
        <begin position="182"/>
        <end position="195"/>
    </location>
</feature>
<feature type="disulfide bond" evidence="5">
    <location>
        <begin position="185"/>
        <end position="191"/>
    </location>
</feature>
<feature type="sequence conflict" description="In Ref. 6; AAA40465." evidence="8" ref="6">
    <original>R</original>
    <variation>G</variation>
    <location>
        <position position="394"/>
    </location>
</feature>
<reference key="1">
    <citation type="journal article" date="1991" name="Proc. Natl. Acad. Sci. U.S.A.">
        <title>Cloning and expression of cDNAs for two distinct murine tumor necrosis factor receptors demonstrate one receptor is species specific.</title>
        <authorList>
            <person name="Lewis M."/>
            <person name="Tartaglia L.A."/>
            <person name="Lee A."/>
            <person name="Bennett G.L."/>
            <person name="Rice G.C."/>
            <person name="Wong G.H."/>
            <person name="Chen E.Y."/>
            <person name="Goeddel D.V."/>
        </authorList>
    </citation>
    <scope>NUCLEOTIDE SEQUENCE [MRNA]</scope>
</reference>
<reference key="2">
    <citation type="journal article" date="1991" name="Mol. Cell. Biol.">
        <title>Molecular cloning and expression of the type 1 and type 2 murine receptors for tumor necrosis factor.</title>
        <authorList>
            <person name="Goodwin R.G."/>
            <person name="Anderson D."/>
            <person name="Jerzy R."/>
            <person name="Davis T."/>
            <person name="Brannan C.I."/>
            <person name="Copeland N.G."/>
            <person name="Jenkins N.A."/>
            <person name="Smith C.A."/>
        </authorList>
    </citation>
    <scope>NUCLEOTIDE SEQUENCE [MRNA]</scope>
</reference>
<reference key="3">
    <citation type="journal article" date="1991" name="Eur. J. Immunol.">
        <title>Cloning, expression and cross-linking analysis of the murine p55 tumor necrosis factor receptor.</title>
        <authorList>
            <person name="Barrett K."/>
            <person name="Taylor-Fishwick D.A."/>
            <person name="Cope A.P."/>
            <person name="Kissonerghis A.M."/>
            <person name="Gray P.W."/>
            <person name="Feldmann M."/>
            <person name="Foxwell B.M.J."/>
        </authorList>
    </citation>
    <scope>NUCLEOTIDE SEQUENCE [MRNA]</scope>
</reference>
<reference key="4">
    <citation type="journal article" date="1991" name="Immunogenetics">
        <title>Molecular cloning and expression of the mouse Tnf receptor type b.</title>
        <authorList>
            <person name="Rothe J.G."/>
            <person name="Brockhaus M."/>
            <person name="Gentz R."/>
            <person name="Lesslauer W."/>
        </authorList>
    </citation>
    <scope>NUCLEOTIDE SEQUENCE [MRNA]</scope>
    <source>
        <tissue>Spleen</tissue>
    </source>
</reference>
<reference key="5">
    <citation type="journal article" date="1994" name="Immunogenetics">
        <title>Nucleotide sequence of the TNF type I receptor from a mouse endothelioma cell line.</title>
        <authorList>
            <person name="Bebo B.F."/>
            <person name="Linthicum D.S."/>
        </authorList>
    </citation>
    <scope>NUCLEOTIDE SEQUENCE [MRNA]</scope>
</reference>
<reference key="6">
    <citation type="journal article" date="1993" name="Mol. Immunol.">
        <title>Genomic organization and promoter function of the murine tumor necrosis factor receptor beta gene.</title>
        <authorList>
            <person name="Rothe J."/>
            <person name="Bluethmann H."/>
            <person name="Gentz R."/>
            <person name="Lesslauer W."/>
            <person name="Steinmetz M."/>
        </authorList>
    </citation>
    <scope>NUCLEOTIDE SEQUENCE [GENOMIC DNA]</scope>
</reference>
<reference key="7">
    <citation type="journal article" date="2004" name="Genome Res.">
        <title>The status, quality, and expansion of the NIH full-length cDNA project: the Mammalian Gene Collection (MGC).</title>
        <authorList>
            <consortium name="The MGC Project Team"/>
        </authorList>
    </citation>
    <scope>NUCLEOTIDE SEQUENCE [LARGE SCALE MRNA]</scope>
    <source>
        <strain>C3H/He</strain>
        <tissue>Mesenchymal cell</tissue>
    </source>
</reference>
<reference key="8">
    <citation type="journal article" date="2014" name="Cell Death Differ.">
        <title>A novel role for the apoptosis inhibitor ARC in suppressing TNFalpha-induced regulated necrosis.</title>
        <authorList>
            <person name="Kung G."/>
            <person name="Dai P."/>
            <person name="Deng L."/>
            <person name="Kitsis R.N."/>
        </authorList>
    </citation>
    <scope>INTERACTION WITH NOL3</scope>
</reference>
<reference key="9">
    <citation type="journal article" date="2019" name="Mol. Cell. Proteomics">
        <title>Salmonella effectors SseK1 and SseK3 target death domain proteins in the TNF and TRAIL signaling pathways.</title>
        <authorList>
            <person name="Newson J.P.M."/>
            <person name="Scott N.E."/>
            <person name="Yeuk Wah Chung I."/>
            <person name="Wong Fok Lung T."/>
            <person name="Giogha C."/>
            <person name="Gan J."/>
            <person name="Wang N."/>
            <person name="Strugnell R.A."/>
            <person name="Brown N.F."/>
            <person name="Cygler M."/>
            <person name="Pearson J.S."/>
            <person name="Hartland E.L."/>
        </authorList>
    </citation>
    <scope>GLYCOSYLATION AT ARG-376 (MICROBIAL INFECTION)</scope>
</reference>
<name>TNR1A_MOUSE</name>
<gene>
    <name type="primary">Tnfrsf1a</name>
    <name type="synonym">Tnfr-1</name>
    <name type="synonym">Tnfr1</name>
</gene>
<protein>
    <recommendedName>
        <fullName>Tumor necrosis factor receptor superfamily member 1A</fullName>
    </recommendedName>
    <alternativeName>
        <fullName>Tumor necrosis factor receptor 1</fullName>
        <shortName>TNF-R1</shortName>
    </alternativeName>
    <alternativeName>
        <fullName>Tumor necrosis factor receptor type I</fullName>
        <shortName>TNF-RI</shortName>
        <shortName>TNFR-I</shortName>
    </alternativeName>
    <alternativeName>
        <fullName>p55</fullName>
    </alternativeName>
    <alternativeName>
        <fullName>p60</fullName>
    </alternativeName>
    <cdAntigenName>CD120a</cdAntigenName>
</protein>
<comment type="function">
    <text evidence="1">Receptor for TNFSF2/TNF-alpha and homotrimeric TNFSF1/lymphotoxin-alpha. The adapter molecule FADD recruits caspase-8 to the activated receptor. The resulting death-inducing signaling complex (DISC) performs caspase-8 proteolytic activation which initiates the subsequent cascade of caspases (aspartate-specific cysteine proteases) mediating apoptosis (By similarity).</text>
</comment>
<comment type="subunit">
    <text evidence="2 6">Binding of TNF to the extracellular domain leads to homotrimerization. The aggregated death domains provide a novel molecular interface that interacts specifically with the death domain of TRADD. Various TRADD-interacting proteins such as TRAFS, RIPK1 and possibly FADD, are recruited to the complex by their association with TRADD. This complex activates at least two distinct signaling cascades, apoptosis and NF-kappa-B signaling. Interacts with BAG4, BABAM2, FEM1B, GRB2, SQSTM1 and TRPC4AP. Interacts with DAB2IP (By similarity). Interacts directly with NOL3 (via CARD domain); inhibits TNF-signaling pathway (PubMed:24440909). Interacts with SH3RF2, TRADD and RIPK1. SH3RF2 facilitates the recruitment of RIPK1 and TRADD to TNFRSF1A in a TNF-alpha-dependent process (By similarity). Interacts with PGLYRP1; this interaction is important for cell death induction (By similarity). Interacts (via death domain) with MADD (via death domain) (By similarity).</text>
</comment>
<comment type="interaction">
    <interactant intactId="EBI-518014">
        <id>P25118</id>
    </interactant>
    <interactant intactId="EBI-5480799">
        <id>Q9EQY0</id>
        <label>Ern1</label>
    </interactant>
    <organismsDiffer>false</organismsDiffer>
    <experiments>2</experiments>
</comment>
<comment type="interaction">
    <interactant intactId="EBI-518014">
        <id>P25118</id>
    </interactant>
    <interactant intactId="EBI-529119">
        <id>Q60855</id>
        <label>Ripk1</label>
    </interactant>
    <organismsDiffer>false</organismsDiffer>
    <experiments>4</experiments>
</comment>
<comment type="interaction">
    <interactant intactId="EBI-518014">
        <id>P25118</id>
    </interactant>
    <interactant intactId="EBI-644519">
        <id>Q31125</id>
        <label>Slc39a7</label>
    </interactant>
    <organismsDiffer>false</organismsDiffer>
    <experiments>3</experiments>
</comment>
<comment type="interaction">
    <interactant intactId="EBI-518014">
        <id>P25118</id>
    </interactant>
    <interactant intactId="EBI-413074">
        <id>P62991</id>
        <label>Ubc</label>
    </interactant>
    <organismsDiffer>false</organismsDiffer>
    <experiments>2</experiments>
</comment>
<comment type="interaction">
    <interactant intactId="EBI-518014">
        <id>P25118</id>
    </interactant>
    <interactant intactId="EBI-359977">
        <id>P01375</id>
        <label>TNF</label>
    </interactant>
    <organismsDiffer>true</organismsDiffer>
    <experiments>4</experiments>
</comment>
<comment type="subcellular location">
    <subcellularLocation>
        <location>Cell membrane</location>
        <topology>Single-pass type I membrane protein</topology>
    </subcellularLocation>
    <subcellularLocation>
        <location evidence="1">Golgi apparatus membrane</location>
        <topology evidence="1">Single-pass type I membrane protein</topology>
    </subcellularLocation>
</comment>
<comment type="domain">
    <text>Both the cytoplasmic membrane-proximal region and the C-terminal region containing the death domain are involved in the interaction with TRPC4AP.</text>
</comment>
<comment type="PTM">
    <text evidence="7">(Microbial infection) Glycosylated at Arg-376 by S.typhimurium protein Ssek3: arginine GlcNAcylation prevents homotypic/heterotypic death domain interactions.</text>
</comment>
<evidence type="ECO:0000250" key="1"/>
<evidence type="ECO:0000250" key="2">
    <source>
        <dbReference type="UniProtKB" id="P19438"/>
    </source>
</evidence>
<evidence type="ECO:0000255" key="3"/>
<evidence type="ECO:0000255" key="4">
    <source>
        <dbReference type="PROSITE-ProRule" id="PRU00064"/>
    </source>
</evidence>
<evidence type="ECO:0000255" key="5">
    <source>
        <dbReference type="PROSITE-ProRule" id="PRU00206"/>
    </source>
</evidence>
<evidence type="ECO:0000269" key="6">
    <source>
    </source>
</evidence>
<evidence type="ECO:0000269" key="7">
    <source>
    </source>
</evidence>
<evidence type="ECO:0000305" key="8"/>